<feature type="chain" id="PRO_1000126910" description="Large ribosomal subunit protein bL9">
    <location>
        <begin position="1"/>
        <end position="149"/>
    </location>
</feature>
<feature type="modified residue" description="N6-acetyllysine" evidence="1">
    <location>
        <position position="89"/>
    </location>
</feature>
<sequence length="149" mass="15769">MQVILLDKVANLGSLGDQVNVKAGYARNFLVPQGKAVPATKKNIEFFEARRAELEAKLAEVLAAANARAEKINALETVTIASKAGDEGKLFGSIGTRDIADAVTAAGVEVAKSEVRLPNGVLRTTGEHEVSFQVHSEVFAKVIVNVVAE</sequence>
<proteinExistence type="inferred from homology"/>
<reference key="1">
    <citation type="journal article" date="2008" name="DNA Res.">
        <title>Complete genome sequence and comparative analysis of the wild-type commensal Escherichia coli strain SE11 isolated from a healthy adult.</title>
        <authorList>
            <person name="Oshima K."/>
            <person name="Toh H."/>
            <person name="Ogura Y."/>
            <person name="Sasamoto H."/>
            <person name="Morita H."/>
            <person name="Park S.-H."/>
            <person name="Ooka T."/>
            <person name="Iyoda S."/>
            <person name="Taylor T.D."/>
            <person name="Hayashi T."/>
            <person name="Itoh K."/>
            <person name="Hattori M."/>
        </authorList>
    </citation>
    <scope>NUCLEOTIDE SEQUENCE [LARGE SCALE GENOMIC DNA]</scope>
    <source>
        <strain>SE11</strain>
    </source>
</reference>
<comment type="function">
    <text evidence="1">Binds to the 23S rRNA.</text>
</comment>
<comment type="similarity">
    <text evidence="1">Belongs to the bacterial ribosomal protein bL9 family.</text>
</comment>
<evidence type="ECO:0000255" key="1">
    <source>
        <dbReference type="HAMAP-Rule" id="MF_00503"/>
    </source>
</evidence>
<evidence type="ECO:0000305" key="2"/>
<gene>
    <name evidence="1" type="primary">rplI</name>
    <name type="ordered locus">ECSE_4502</name>
</gene>
<accession>B6I2A9</accession>
<organism>
    <name type="scientific">Escherichia coli (strain SE11)</name>
    <dbReference type="NCBI Taxonomy" id="409438"/>
    <lineage>
        <taxon>Bacteria</taxon>
        <taxon>Pseudomonadati</taxon>
        <taxon>Pseudomonadota</taxon>
        <taxon>Gammaproteobacteria</taxon>
        <taxon>Enterobacterales</taxon>
        <taxon>Enterobacteriaceae</taxon>
        <taxon>Escherichia</taxon>
    </lineage>
</organism>
<protein>
    <recommendedName>
        <fullName evidence="1">Large ribosomal subunit protein bL9</fullName>
    </recommendedName>
    <alternativeName>
        <fullName evidence="2">50S ribosomal protein L9</fullName>
    </alternativeName>
</protein>
<dbReference type="EMBL" id="AP009240">
    <property type="protein sequence ID" value="BAG80026.1"/>
    <property type="molecule type" value="Genomic_DNA"/>
</dbReference>
<dbReference type="RefSeq" id="WP_001196062.1">
    <property type="nucleotide sequence ID" value="NC_011415.1"/>
</dbReference>
<dbReference type="SMR" id="B6I2A9"/>
<dbReference type="GeneID" id="93777620"/>
<dbReference type="KEGG" id="ecy:ECSE_4502"/>
<dbReference type="HOGENOM" id="CLU_078938_4_1_6"/>
<dbReference type="Proteomes" id="UP000008199">
    <property type="component" value="Chromosome"/>
</dbReference>
<dbReference type="GO" id="GO:1990904">
    <property type="term" value="C:ribonucleoprotein complex"/>
    <property type="evidence" value="ECO:0007669"/>
    <property type="project" value="UniProtKB-KW"/>
</dbReference>
<dbReference type="GO" id="GO:0005840">
    <property type="term" value="C:ribosome"/>
    <property type="evidence" value="ECO:0007669"/>
    <property type="project" value="UniProtKB-KW"/>
</dbReference>
<dbReference type="GO" id="GO:0019843">
    <property type="term" value="F:rRNA binding"/>
    <property type="evidence" value="ECO:0007669"/>
    <property type="project" value="UniProtKB-UniRule"/>
</dbReference>
<dbReference type="GO" id="GO:0003735">
    <property type="term" value="F:structural constituent of ribosome"/>
    <property type="evidence" value="ECO:0007669"/>
    <property type="project" value="InterPro"/>
</dbReference>
<dbReference type="GO" id="GO:0006412">
    <property type="term" value="P:translation"/>
    <property type="evidence" value="ECO:0007669"/>
    <property type="project" value="UniProtKB-UniRule"/>
</dbReference>
<dbReference type="FunFam" id="3.10.430.100:FF:000001">
    <property type="entry name" value="50S ribosomal protein L9"/>
    <property type="match status" value="1"/>
</dbReference>
<dbReference type="FunFam" id="3.40.5.10:FF:000001">
    <property type="entry name" value="50S ribosomal protein L9"/>
    <property type="match status" value="1"/>
</dbReference>
<dbReference type="Gene3D" id="3.10.430.100">
    <property type="entry name" value="Ribosomal protein L9, C-terminal domain"/>
    <property type="match status" value="1"/>
</dbReference>
<dbReference type="Gene3D" id="3.40.5.10">
    <property type="entry name" value="Ribosomal protein L9, N-terminal domain"/>
    <property type="match status" value="1"/>
</dbReference>
<dbReference type="HAMAP" id="MF_00503">
    <property type="entry name" value="Ribosomal_bL9"/>
    <property type="match status" value="1"/>
</dbReference>
<dbReference type="InterPro" id="IPR000244">
    <property type="entry name" value="Ribosomal_bL9"/>
</dbReference>
<dbReference type="InterPro" id="IPR009027">
    <property type="entry name" value="Ribosomal_bL9/RNase_H1_N"/>
</dbReference>
<dbReference type="InterPro" id="IPR020594">
    <property type="entry name" value="Ribosomal_bL9_bac/chp"/>
</dbReference>
<dbReference type="InterPro" id="IPR020069">
    <property type="entry name" value="Ribosomal_bL9_C"/>
</dbReference>
<dbReference type="InterPro" id="IPR036791">
    <property type="entry name" value="Ribosomal_bL9_C_sf"/>
</dbReference>
<dbReference type="InterPro" id="IPR020070">
    <property type="entry name" value="Ribosomal_bL9_N"/>
</dbReference>
<dbReference type="InterPro" id="IPR036935">
    <property type="entry name" value="Ribosomal_bL9_N_sf"/>
</dbReference>
<dbReference type="NCBIfam" id="TIGR00158">
    <property type="entry name" value="L9"/>
    <property type="match status" value="1"/>
</dbReference>
<dbReference type="PANTHER" id="PTHR21368">
    <property type="entry name" value="50S RIBOSOMAL PROTEIN L9"/>
    <property type="match status" value="1"/>
</dbReference>
<dbReference type="Pfam" id="PF03948">
    <property type="entry name" value="Ribosomal_L9_C"/>
    <property type="match status" value="1"/>
</dbReference>
<dbReference type="Pfam" id="PF01281">
    <property type="entry name" value="Ribosomal_L9_N"/>
    <property type="match status" value="1"/>
</dbReference>
<dbReference type="SUPFAM" id="SSF55658">
    <property type="entry name" value="L9 N-domain-like"/>
    <property type="match status" value="1"/>
</dbReference>
<dbReference type="SUPFAM" id="SSF55653">
    <property type="entry name" value="Ribosomal protein L9 C-domain"/>
    <property type="match status" value="1"/>
</dbReference>
<dbReference type="PROSITE" id="PS00651">
    <property type="entry name" value="RIBOSOMAL_L9"/>
    <property type="match status" value="1"/>
</dbReference>
<keyword id="KW-0007">Acetylation</keyword>
<keyword id="KW-0687">Ribonucleoprotein</keyword>
<keyword id="KW-0689">Ribosomal protein</keyword>
<keyword id="KW-0694">RNA-binding</keyword>
<keyword id="KW-0699">rRNA-binding</keyword>
<name>RL9_ECOSE</name>